<organism>
    <name type="scientific">Strongylocentrotus purpuratus</name>
    <name type="common">Purple sea urchin</name>
    <dbReference type="NCBI Taxonomy" id="7668"/>
    <lineage>
        <taxon>Eukaryota</taxon>
        <taxon>Metazoa</taxon>
        <taxon>Echinodermata</taxon>
        <taxon>Eleutherozoa</taxon>
        <taxon>Echinozoa</taxon>
        <taxon>Echinoidea</taxon>
        <taxon>Euechinoidea</taxon>
        <taxon>Echinacea</taxon>
        <taxon>Camarodonta</taxon>
        <taxon>Echinidea</taxon>
        <taxon>Strongylocentrotidae</taxon>
        <taxon>Strongylocentrotus</taxon>
    </lineage>
</organism>
<keyword id="KW-0067">ATP-binding</keyword>
<keyword id="KW-0175">Coiled coil</keyword>
<keyword id="KW-0963">Cytoplasm</keyword>
<keyword id="KW-0206">Cytoskeleton</keyword>
<keyword id="KW-0493">Microtubule</keyword>
<keyword id="KW-0505">Motor protein</keyword>
<keyword id="KW-0547">Nucleotide-binding</keyword>
<keyword id="KW-1185">Reference proteome</keyword>
<feature type="chain" id="PRO_0000125359" description="Kinesin heavy chain">
    <location>
        <begin position="1"/>
        <end position="1031"/>
    </location>
</feature>
<feature type="domain" description="Kinesin motor" evidence="1">
    <location>
        <begin position="8"/>
        <end position="325"/>
    </location>
</feature>
<feature type="region of interest" description="Disordered" evidence="2">
    <location>
        <begin position="673"/>
        <end position="692"/>
    </location>
</feature>
<feature type="region of interest" description="Globular">
    <location>
        <begin position="858"/>
        <end position="1031"/>
    </location>
</feature>
<feature type="region of interest" description="Disordered" evidence="2">
    <location>
        <begin position="906"/>
        <end position="1031"/>
    </location>
</feature>
<feature type="coiled-coil region">
    <location>
        <begin position="393"/>
        <end position="857"/>
    </location>
</feature>
<feature type="compositionally biased region" description="Basic and acidic residues" evidence="2">
    <location>
        <begin position="673"/>
        <end position="686"/>
    </location>
</feature>
<feature type="compositionally biased region" description="Gly residues" evidence="2">
    <location>
        <begin position="932"/>
        <end position="949"/>
    </location>
</feature>
<feature type="compositionally biased region" description="Polar residues" evidence="2">
    <location>
        <begin position="964"/>
        <end position="977"/>
    </location>
</feature>
<feature type="compositionally biased region" description="Polar residues" evidence="2">
    <location>
        <begin position="1014"/>
        <end position="1031"/>
    </location>
</feature>
<feature type="binding site" evidence="1">
    <location>
        <begin position="84"/>
        <end position="91"/>
    </location>
    <ligand>
        <name>ATP</name>
        <dbReference type="ChEBI" id="CHEBI:30616"/>
    </ligand>
</feature>
<reference key="1">
    <citation type="journal article" date="1991" name="J. Cell Biol.">
        <title>Subcellular localization and sequence of sea urchin kinesin heavy chain: evidence for its association with membranes in the mitotic apparatus and interphase cytoplasm.</title>
        <authorList>
            <person name="Wright B.D."/>
            <person name="Henson J.H."/>
            <person name="Wedaman K.P."/>
            <person name="Willy P.J."/>
            <person name="Morand J.N."/>
            <person name="Scholey J.M."/>
        </authorList>
    </citation>
    <scope>NUCLEOTIDE SEQUENCE [MRNA]</scope>
</reference>
<accession>P35978</accession>
<protein>
    <recommendedName>
        <fullName>Kinesin heavy chain</fullName>
    </recommendedName>
</protein>
<dbReference type="EMBL" id="X56844">
    <property type="protein sequence ID" value="CAA40175.1"/>
    <property type="molecule type" value="mRNA"/>
</dbReference>
<dbReference type="PIR" id="A38713">
    <property type="entry name" value="A38713"/>
</dbReference>
<dbReference type="RefSeq" id="NP_999628.1">
    <property type="nucleotide sequence ID" value="NM_214463.1"/>
</dbReference>
<dbReference type="SMR" id="P35978"/>
<dbReference type="FunCoup" id="P35978">
    <property type="interactions" value="1112"/>
</dbReference>
<dbReference type="STRING" id="7668.P35978"/>
<dbReference type="EnsemblMetazoa" id="NM_214463">
    <property type="protein sequence ID" value="NP_999628"/>
    <property type="gene ID" value="LOC373178"/>
</dbReference>
<dbReference type="GeneID" id="373178"/>
<dbReference type="KEGG" id="spu:373178"/>
<dbReference type="eggNOG" id="KOG0240">
    <property type="taxonomic scope" value="Eukaryota"/>
</dbReference>
<dbReference type="InParanoid" id="P35978"/>
<dbReference type="OMA" id="DSKSREC"/>
<dbReference type="OrthoDB" id="3176171at2759"/>
<dbReference type="PhylomeDB" id="P35978"/>
<dbReference type="Proteomes" id="UP000007110">
    <property type="component" value="Unassembled WGS sequence"/>
</dbReference>
<dbReference type="GO" id="GO:0005737">
    <property type="term" value="C:cytoplasm"/>
    <property type="evidence" value="ECO:0000318"/>
    <property type="project" value="GO_Central"/>
</dbReference>
<dbReference type="GO" id="GO:0032839">
    <property type="term" value="C:dendrite cytoplasm"/>
    <property type="evidence" value="ECO:0007669"/>
    <property type="project" value="GOC"/>
</dbReference>
<dbReference type="GO" id="GO:0005871">
    <property type="term" value="C:kinesin complex"/>
    <property type="evidence" value="ECO:0000318"/>
    <property type="project" value="GO_Central"/>
</dbReference>
<dbReference type="GO" id="GO:0005874">
    <property type="term" value="C:microtubule"/>
    <property type="evidence" value="ECO:0000318"/>
    <property type="project" value="GO_Central"/>
</dbReference>
<dbReference type="GO" id="GO:0005524">
    <property type="term" value="F:ATP binding"/>
    <property type="evidence" value="ECO:0007669"/>
    <property type="project" value="UniProtKB-KW"/>
</dbReference>
<dbReference type="GO" id="GO:0016887">
    <property type="term" value="F:ATP hydrolysis activity"/>
    <property type="evidence" value="ECO:0000318"/>
    <property type="project" value="GO_Central"/>
</dbReference>
<dbReference type="GO" id="GO:0008017">
    <property type="term" value="F:microtubule binding"/>
    <property type="evidence" value="ECO:0000318"/>
    <property type="project" value="GO_Central"/>
</dbReference>
<dbReference type="GO" id="GO:0008574">
    <property type="term" value="F:plus-end-directed microtubule motor activity"/>
    <property type="evidence" value="ECO:0000318"/>
    <property type="project" value="GO_Central"/>
</dbReference>
<dbReference type="GO" id="GO:0098971">
    <property type="term" value="P:anterograde dendritic transport of neurotransmitter receptor complex"/>
    <property type="evidence" value="ECO:0000318"/>
    <property type="project" value="GO_Central"/>
</dbReference>
<dbReference type="GO" id="GO:0007411">
    <property type="term" value="P:axon guidance"/>
    <property type="evidence" value="ECO:0000318"/>
    <property type="project" value="GO_Central"/>
</dbReference>
<dbReference type="GO" id="GO:0048489">
    <property type="term" value="P:synaptic vesicle transport"/>
    <property type="evidence" value="ECO:0000318"/>
    <property type="project" value="GO_Central"/>
</dbReference>
<dbReference type="CDD" id="cd23649">
    <property type="entry name" value="Khc_CBD_cc"/>
    <property type="match status" value="1"/>
</dbReference>
<dbReference type="CDD" id="cd01369">
    <property type="entry name" value="KISc_KHC_KIF5"/>
    <property type="match status" value="1"/>
</dbReference>
<dbReference type="FunFam" id="3.40.850.10:FF:000067">
    <property type="entry name" value="Kinesin-like protein"/>
    <property type="match status" value="1"/>
</dbReference>
<dbReference type="Gene3D" id="6.10.250.1590">
    <property type="match status" value="1"/>
</dbReference>
<dbReference type="Gene3D" id="3.40.850.10">
    <property type="entry name" value="Kinesin motor domain"/>
    <property type="match status" value="1"/>
</dbReference>
<dbReference type="InterPro" id="IPR027640">
    <property type="entry name" value="Kinesin-like_fam"/>
</dbReference>
<dbReference type="InterPro" id="IPR019821">
    <property type="entry name" value="Kinesin_motor_CS"/>
</dbReference>
<dbReference type="InterPro" id="IPR001752">
    <property type="entry name" value="Kinesin_motor_dom"/>
</dbReference>
<dbReference type="InterPro" id="IPR036961">
    <property type="entry name" value="Kinesin_motor_dom_sf"/>
</dbReference>
<dbReference type="InterPro" id="IPR027417">
    <property type="entry name" value="P-loop_NTPase"/>
</dbReference>
<dbReference type="PANTHER" id="PTHR47968">
    <property type="entry name" value="CENTROMERE PROTEIN E"/>
    <property type="match status" value="1"/>
</dbReference>
<dbReference type="PANTHER" id="PTHR47968:SF36">
    <property type="entry name" value="KINESIN HEAVY CHAIN ISOFORM X1"/>
    <property type="match status" value="1"/>
</dbReference>
<dbReference type="Pfam" id="PF00225">
    <property type="entry name" value="Kinesin"/>
    <property type="match status" value="1"/>
</dbReference>
<dbReference type="PRINTS" id="PR00380">
    <property type="entry name" value="KINESINHEAVY"/>
</dbReference>
<dbReference type="SMART" id="SM00129">
    <property type="entry name" value="KISc"/>
    <property type="match status" value="1"/>
</dbReference>
<dbReference type="SUPFAM" id="SSF52540">
    <property type="entry name" value="P-loop containing nucleoside triphosphate hydrolases"/>
    <property type="match status" value="1"/>
</dbReference>
<dbReference type="PROSITE" id="PS00411">
    <property type="entry name" value="KINESIN_MOTOR_1"/>
    <property type="match status" value="1"/>
</dbReference>
<dbReference type="PROSITE" id="PS50067">
    <property type="entry name" value="KINESIN_MOTOR_2"/>
    <property type="match status" value="1"/>
</dbReference>
<name>KINH_STRPU</name>
<sequence>MADPAECNIKVVCRVRPMNATEQNTSHICTKFISEEQVQIGGKLNMFDRIFKPNTTQEEVYNKAARQIVKDVLDGYNGTIFAYGQTSSGKTFTMEGVMGNPQYMGIIPRIVQDIFNHIYQMDESLEFHIKVSYFEIYMDRIRDLLDVSKTNLSVHEDKNRVPFVKGATERFASSPEEVMDVIEEGKSNRHIAVTNMNEHSSRSHSIFLIQVKQENMETKKKLSGKLYLVDLAGSEKVSKTGAEGTVLDEAKNINKSLSALGNVISALADGKKSHIPYRDSKMTRILQESLGGNARTTIVICCSPSSFNESESKSTLMFGQRAKTIKNTVTVNMELTAEEWRNRYEKEKEKNGRLKAQLLILENELQRWRAGESVPVKEQGNKNDEILKEMMKPKQMTVHVSEEEKNKWEEEKVKLYEQLDEKDSEIDNQSRLTEKLKQQMLEQEELLSSMQRDYELLQSQMGRLEAENAAAKEEAKEVLQALEEMAVNYDEKSKEVEDKNRMNETLSEEVNEKMTALHTTSTELQKLQELEQHQRRRITEMMASLLKDLGEIGTALGGNAADMKPNVENIEKVDEEFTMARLFVSKMKTEVKTMSQRCKILEASNAENETKIRTSEDELDSCRMTIQQHEAKMKSLSENIRETEGKKRHLEDSLDMLNEEIVKLRAAEEIRLTDQEDKKREEEDKMQSATEMQASMSEQMESHRDAHQKQLANLRTEINEKEHQMEELKDVNQRMTLQHEKLQLDYEKLKIEEAEKAAKLRELSQQFDRREQAKQDLKGLEETVAKELQTLHNLRKLFVSDLQNRVKKALEGGDRDDDSGGSQAQKQKISFLENNLEQLTKVHKQLVRDNADLRCELPKLERRLRATSERVKALEMSLKETKEGAMRDRKRYQQEVDRIREAVRQRNFAKRGSSAQIAKAIRAGHPPPSPGGSTGIRGGGYSGIRGGGSPVIRPPSHGSPEPISHNNSFEKSLNPNDAENMEKKANKRLPKLPPGGNKLTESDIAAMKARSKARNNTPGKAPLTTSGEQGS</sequence>
<proteinExistence type="evidence at transcript level"/>
<comment type="function">
    <text>Kinesin is a microtubule-associated force-producing protein that may play a role in organelle transport.</text>
</comment>
<comment type="subunit">
    <text>Oligomer composed of two heavy chains and two light chains.</text>
</comment>
<comment type="subcellular location">
    <subcellularLocation>
        <location evidence="3">Cytoplasm</location>
        <location evidence="3">Cytoskeleton</location>
    </subcellularLocation>
</comment>
<comment type="domain">
    <text>Composed of three structural domains: a large globular N-terminal domain which is responsible for the motor activity of kinesin (it hydrolyzes ATP and binds microtubule), a central alpha-helical coiled coil domain that mediates the heavy chain dimerization; and a small globular C-terminal domain which interacts with other proteins (such as the kinesin light chains), vesicles and membranous organelles.</text>
</comment>
<comment type="similarity">
    <text evidence="1">Belongs to the TRAFAC class myosin-kinesin ATPase superfamily. Kinesin family. Kinesin subfamily.</text>
</comment>
<evidence type="ECO:0000255" key="1">
    <source>
        <dbReference type="PROSITE-ProRule" id="PRU00283"/>
    </source>
</evidence>
<evidence type="ECO:0000256" key="2">
    <source>
        <dbReference type="SAM" id="MobiDB-lite"/>
    </source>
</evidence>
<evidence type="ECO:0000305" key="3"/>